<sequence>MTVAQPLVLLAAGGTGGHLFPAEALALRLRDRGIRVVLASDGRVEALSGGFPASEIVSIPSATPSGRSPLARGAAFLTLGRGFAAAIRAVRRLNPAVVVGFGGYPTVPPLLAAQMLRVPTLLHEQNAVMGRANGFLARGASVIATGFSEVRGVPARAGARRVHTGNPVRPAVLAAADTPYPALSPDGPLNLLAFGGSQGARVMSEVVPEAVARLPAPLRARLHVVQQARAEDLARAEAIYGRAGLASASVAPFFKDLPARMAAAHLVVARSGASTVAELAVIGRPAILVPLPGSLDQDQAANAAVLGAAGAAFPRPQTDFIPERLAADLEALFGAPERLAAAAAAARRTGIPDAAERLAALVVETAIAASTR</sequence>
<proteinExistence type="inferred from homology"/>
<organism>
    <name type="scientific">Methylobacterium sp. (strain 4-46)</name>
    <dbReference type="NCBI Taxonomy" id="426117"/>
    <lineage>
        <taxon>Bacteria</taxon>
        <taxon>Pseudomonadati</taxon>
        <taxon>Pseudomonadota</taxon>
        <taxon>Alphaproteobacteria</taxon>
        <taxon>Hyphomicrobiales</taxon>
        <taxon>Methylobacteriaceae</taxon>
        <taxon>Methylobacterium</taxon>
    </lineage>
</organism>
<protein>
    <recommendedName>
        <fullName evidence="1">UDP-N-acetylglucosamine--N-acetylmuramyl-(pentapeptide) pyrophosphoryl-undecaprenol N-acetylglucosamine transferase</fullName>
        <ecNumber evidence="1">2.4.1.227</ecNumber>
    </recommendedName>
    <alternativeName>
        <fullName evidence="1">Undecaprenyl-PP-MurNAc-pentapeptide-UDPGlcNAc GlcNAc transferase</fullName>
    </alternativeName>
</protein>
<feature type="chain" id="PRO_1000090449" description="UDP-N-acetylglucosamine--N-acetylmuramyl-(pentapeptide) pyrophosphoryl-undecaprenol N-acetylglucosamine transferase">
    <location>
        <begin position="1"/>
        <end position="372"/>
    </location>
</feature>
<feature type="binding site" evidence="1">
    <location>
        <begin position="15"/>
        <end position="17"/>
    </location>
    <ligand>
        <name>UDP-N-acetyl-alpha-D-glucosamine</name>
        <dbReference type="ChEBI" id="CHEBI:57705"/>
    </ligand>
</feature>
<feature type="binding site" evidence="1">
    <location>
        <position position="126"/>
    </location>
    <ligand>
        <name>UDP-N-acetyl-alpha-D-glucosamine</name>
        <dbReference type="ChEBI" id="CHEBI:57705"/>
    </ligand>
</feature>
<feature type="binding site" evidence="1">
    <location>
        <position position="169"/>
    </location>
    <ligand>
        <name>UDP-N-acetyl-alpha-D-glucosamine</name>
        <dbReference type="ChEBI" id="CHEBI:57705"/>
    </ligand>
</feature>
<feature type="binding site" evidence="1">
    <location>
        <position position="197"/>
    </location>
    <ligand>
        <name>UDP-N-acetyl-alpha-D-glucosamine</name>
        <dbReference type="ChEBI" id="CHEBI:57705"/>
    </ligand>
</feature>
<feature type="binding site" evidence="1">
    <location>
        <position position="299"/>
    </location>
    <ligand>
        <name>UDP-N-acetyl-alpha-D-glucosamine</name>
        <dbReference type="ChEBI" id="CHEBI:57705"/>
    </ligand>
</feature>
<comment type="function">
    <text evidence="1">Cell wall formation. Catalyzes the transfer of a GlcNAc subunit on undecaprenyl-pyrophosphoryl-MurNAc-pentapeptide (lipid intermediate I) to form undecaprenyl-pyrophosphoryl-MurNAc-(pentapeptide)GlcNAc (lipid intermediate II).</text>
</comment>
<comment type="catalytic activity">
    <reaction evidence="1">
        <text>di-trans,octa-cis-undecaprenyl diphospho-N-acetyl-alpha-D-muramoyl-L-alanyl-D-glutamyl-meso-2,6-diaminopimeloyl-D-alanyl-D-alanine + UDP-N-acetyl-alpha-D-glucosamine = di-trans,octa-cis-undecaprenyl diphospho-[N-acetyl-alpha-D-glucosaminyl-(1-&gt;4)]-N-acetyl-alpha-D-muramoyl-L-alanyl-D-glutamyl-meso-2,6-diaminopimeloyl-D-alanyl-D-alanine + UDP + H(+)</text>
        <dbReference type="Rhea" id="RHEA:31227"/>
        <dbReference type="ChEBI" id="CHEBI:15378"/>
        <dbReference type="ChEBI" id="CHEBI:57705"/>
        <dbReference type="ChEBI" id="CHEBI:58223"/>
        <dbReference type="ChEBI" id="CHEBI:61387"/>
        <dbReference type="ChEBI" id="CHEBI:61388"/>
        <dbReference type="EC" id="2.4.1.227"/>
    </reaction>
</comment>
<comment type="pathway">
    <text evidence="1">Cell wall biogenesis; peptidoglycan biosynthesis.</text>
</comment>
<comment type="subcellular location">
    <subcellularLocation>
        <location evidence="1">Cell inner membrane</location>
        <topology evidence="1">Peripheral membrane protein</topology>
        <orientation evidence="1">Cytoplasmic side</orientation>
    </subcellularLocation>
</comment>
<comment type="similarity">
    <text evidence="1">Belongs to the glycosyltransferase 28 family. MurG subfamily.</text>
</comment>
<dbReference type="EC" id="2.4.1.227" evidence="1"/>
<dbReference type="EMBL" id="CP000943">
    <property type="protein sequence ID" value="ACA20954.1"/>
    <property type="molecule type" value="Genomic_DNA"/>
</dbReference>
<dbReference type="RefSeq" id="WP_012336330.1">
    <property type="nucleotide sequence ID" value="NC_010511.1"/>
</dbReference>
<dbReference type="SMR" id="B0UFC7"/>
<dbReference type="STRING" id="426117.M446_6704"/>
<dbReference type="CAZy" id="GT28">
    <property type="family name" value="Glycosyltransferase Family 28"/>
</dbReference>
<dbReference type="KEGG" id="met:M446_6704"/>
<dbReference type="eggNOG" id="COG0707">
    <property type="taxonomic scope" value="Bacteria"/>
</dbReference>
<dbReference type="HOGENOM" id="CLU_037404_2_1_5"/>
<dbReference type="UniPathway" id="UPA00219"/>
<dbReference type="GO" id="GO:0005886">
    <property type="term" value="C:plasma membrane"/>
    <property type="evidence" value="ECO:0007669"/>
    <property type="project" value="UniProtKB-SubCell"/>
</dbReference>
<dbReference type="GO" id="GO:0051991">
    <property type="term" value="F:UDP-N-acetyl-D-glucosamine:N-acetylmuramoyl-L-alanyl-D-glutamyl-meso-2,6-diaminopimelyl-D-alanyl-D-alanine-diphosphoundecaprenol 4-beta-N-acetylglucosaminlytransferase activity"/>
    <property type="evidence" value="ECO:0007669"/>
    <property type="project" value="RHEA"/>
</dbReference>
<dbReference type="GO" id="GO:0050511">
    <property type="term" value="F:undecaprenyldiphospho-muramoylpentapeptide beta-N-acetylglucosaminyltransferase activity"/>
    <property type="evidence" value="ECO:0007669"/>
    <property type="project" value="UniProtKB-UniRule"/>
</dbReference>
<dbReference type="GO" id="GO:0005975">
    <property type="term" value="P:carbohydrate metabolic process"/>
    <property type="evidence" value="ECO:0007669"/>
    <property type="project" value="InterPro"/>
</dbReference>
<dbReference type="GO" id="GO:0051301">
    <property type="term" value="P:cell division"/>
    <property type="evidence" value="ECO:0007669"/>
    <property type="project" value="UniProtKB-KW"/>
</dbReference>
<dbReference type="GO" id="GO:0071555">
    <property type="term" value="P:cell wall organization"/>
    <property type="evidence" value="ECO:0007669"/>
    <property type="project" value="UniProtKB-KW"/>
</dbReference>
<dbReference type="GO" id="GO:0030259">
    <property type="term" value="P:lipid glycosylation"/>
    <property type="evidence" value="ECO:0007669"/>
    <property type="project" value="UniProtKB-UniRule"/>
</dbReference>
<dbReference type="GO" id="GO:0009252">
    <property type="term" value="P:peptidoglycan biosynthetic process"/>
    <property type="evidence" value="ECO:0007669"/>
    <property type="project" value="UniProtKB-UniRule"/>
</dbReference>
<dbReference type="GO" id="GO:0008360">
    <property type="term" value="P:regulation of cell shape"/>
    <property type="evidence" value="ECO:0007669"/>
    <property type="project" value="UniProtKB-KW"/>
</dbReference>
<dbReference type="CDD" id="cd03785">
    <property type="entry name" value="GT28_MurG"/>
    <property type="match status" value="1"/>
</dbReference>
<dbReference type="Gene3D" id="3.40.50.2000">
    <property type="entry name" value="Glycogen Phosphorylase B"/>
    <property type="match status" value="2"/>
</dbReference>
<dbReference type="HAMAP" id="MF_00033">
    <property type="entry name" value="MurG"/>
    <property type="match status" value="1"/>
</dbReference>
<dbReference type="InterPro" id="IPR006009">
    <property type="entry name" value="GlcNAc_MurG"/>
</dbReference>
<dbReference type="InterPro" id="IPR007235">
    <property type="entry name" value="Glyco_trans_28_C"/>
</dbReference>
<dbReference type="InterPro" id="IPR004276">
    <property type="entry name" value="GlycoTrans_28_N"/>
</dbReference>
<dbReference type="NCBIfam" id="TIGR01133">
    <property type="entry name" value="murG"/>
    <property type="match status" value="1"/>
</dbReference>
<dbReference type="PANTHER" id="PTHR21015:SF22">
    <property type="entry name" value="GLYCOSYLTRANSFERASE"/>
    <property type="match status" value="1"/>
</dbReference>
<dbReference type="PANTHER" id="PTHR21015">
    <property type="entry name" value="UDP-N-ACETYLGLUCOSAMINE--N-ACETYLMURAMYL-(PENTAPEPTIDE) PYROPHOSPHORYL-UNDECAPRENOL N-ACETYLGLUCOSAMINE TRANSFERASE 1"/>
    <property type="match status" value="1"/>
</dbReference>
<dbReference type="Pfam" id="PF04101">
    <property type="entry name" value="Glyco_tran_28_C"/>
    <property type="match status" value="1"/>
</dbReference>
<dbReference type="Pfam" id="PF03033">
    <property type="entry name" value="Glyco_transf_28"/>
    <property type="match status" value="1"/>
</dbReference>
<dbReference type="SUPFAM" id="SSF53756">
    <property type="entry name" value="UDP-Glycosyltransferase/glycogen phosphorylase"/>
    <property type="match status" value="1"/>
</dbReference>
<accession>B0UFC7</accession>
<name>MURG_METS4</name>
<reference key="1">
    <citation type="submission" date="2008-02" db="EMBL/GenBank/DDBJ databases">
        <title>Complete sequence of chromosome of Methylobacterium sp. 4-46.</title>
        <authorList>
            <consortium name="US DOE Joint Genome Institute"/>
            <person name="Copeland A."/>
            <person name="Lucas S."/>
            <person name="Lapidus A."/>
            <person name="Glavina del Rio T."/>
            <person name="Dalin E."/>
            <person name="Tice H."/>
            <person name="Bruce D."/>
            <person name="Goodwin L."/>
            <person name="Pitluck S."/>
            <person name="Chertkov O."/>
            <person name="Brettin T."/>
            <person name="Detter J.C."/>
            <person name="Han C."/>
            <person name="Kuske C.R."/>
            <person name="Schmutz J."/>
            <person name="Larimer F."/>
            <person name="Land M."/>
            <person name="Hauser L."/>
            <person name="Kyrpides N."/>
            <person name="Ivanova N."/>
            <person name="Marx C.J."/>
            <person name="Richardson P."/>
        </authorList>
    </citation>
    <scope>NUCLEOTIDE SEQUENCE [LARGE SCALE GENOMIC DNA]</scope>
    <source>
        <strain>4-46</strain>
    </source>
</reference>
<gene>
    <name evidence="1" type="primary">murG</name>
    <name type="ordered locus">M446_6704</name>
</gene>
<keyword id="KW-0131">Cell cycle</keyword>
<keyword id="KW-0132">Cell division</keyword>
<keyword id="KW-0997">Cell inner membrane</keyword>
<keyword id="KW-1003">Cell membrane</keyword>
<keyword id="KW-0133">Cell shape</keyword>
<keyword id="KW-0961">Cell wall biogenesis/degradation</keyword>
<keyword id="KW-0328">Glycosyltransferase</keyword>
<keyword id="KW-0472">Membrane</keyword>
<keyword id="KW-0573">Peptidoglycan synthesis</keyword>
<keyword id="KW-0808">Transferase</keyword>
<evidence type="ECO:0000255" key="1">
    <source>
        <dbReference type="HAMAP-Rule" id="MF_00033"/>
    </source>
</evidence>